<feature type="chain" id="PRO_0000311439" description="Iron-sulfur cluster insertion protein ErpA">
    <location>
        <begin position="1"/>
        <end position="113"/>
    </location>
</feature>
<feature type="binding site" evidence="1">
    <location>
        <position position="41"/>
    </location>
    <ligand>
        <name>iron-sulfur cluster</name>
        <dbReference type="ChEBI" id="CHEBI:30408"/>
    </ligand>
</feature>
<feature type="binding site" evidence="1">
    <location>
        <position position="105"/>
    </location>
    <ligand>
        <name>iron-sulfur cluster</name>
        <dbReference type="ChEBI" id="CHEBI:30408"/>
    </ligand>
</feature>
<feature type="binding site" evidence="1">
    <location>
        <position position="107"/>
    </location>
    <ligand>
        <name>iron-sulfur cluster</name>
        <dbReference type="ChEBI" id="CHEBI:30408"/>
    </ligand>
</feature>
<organism>
    <name type="scientific">Actinobacillus pleuropneumoniae serotype 5b (strain L20)</name>
    <dbReference type="NCBI Taxonomy" id="416269"/>
    <lineage>
        <taxon>Bacteria</taxon>
        <taxon>Pseudomonadati</taxon>
        <taxon>Pseudomonadota</taxon>
        <taxon>Gammaproteobacteria</taxon>
        <taxon>Pasteurellales</taxon>
        <taxon>Pasteurellaceae</taxon>
        <taxon>Actinobacillus</taxon>
    </lineage>
</organism>
<gene>
    <name evidence="1" type="primary">erpA</name>
    <name type="ordered locus">APL_1462</name>
</gene>
<dbReference type="EMBL" id="CP000569">
    <property type="protein sequence ID" value="ABN74546.1"/>
    <property type="molecule type" value="Genomic_DNA"/>
</dbReference>
<dbReference type="RefSeq" id="WP_009875040.1">
    <property type="nucleotide sequence ID" value="NC_009053.1"/>
</dbReference>
<dbReference type="SMR" id="A3N2B0"/>
<dbReference type="STRING" id="416269.APL_1462"/>
<dbReference type="EnsemblBacteria" id="ABN74546">
    <property type="protein sequence ID" value="ABN74546"/>
    <property type="gene ID" value="APL_1462"/>
</dbReference>
<dbReference type="KEGG" id="apl:APL_1462"/>
<dbReference type="PATRIC" id="fig|416269.6.peg.1523"/>
<dbReference type="eggNOG" id="COG0316">
    <property type="taxonomic scope" value="Bacteria"/>
</dbReference>
<dbReference type="HOGENOM" id="CLU_069054_5_3_6"/>
<dbReference type="Proteomes" id="UP000001432">
    <property type="component" value="Chromosome"/>
</dbReference>
<dbReference type="GO" id="GO:0005829">
    <property type="term" value="C:cytosol"/>
    <property type="evidence" value="ECO:0007669"/>
    <property type="project" value="TreeGrafter"/>
</dbReference>
<dbReference type="GO" id="GO:0051537">
    <property type="term" value="F:2 iron, 2 sulfur cluster binding"/>
    <property type="evidence" value="ECO:0007669"/>
    <property type="project" value="TreeGrafter"/>
</dbReference>
<dbReference type="GO" id="GO:0051539">
    <property type="term" value="F:4 iron, 4 sulfur cluster binding"/>
    <property type="evidence" value="ECO:0007669"/>
    <property type="project" value="TreeGrafter"/>
</dbReference>
<dbReference type="GO" id="GO:0005506">
    <property type="term" value="F:iron ion binding"/>
    <property type="evidence" value="ECO:0007669"/>
    <property type="project" value="UniProtKB-UniRule"/>
</dbReference>
<dbReference type="GO" id="GO:0016226">
    <property type="term" value="P:iron-sulfur cluster assembly"/>
    <property type="evidence" value="ECO:0007669"/>
    <property type="project" value="UniProtKB-UniRule"/>
</dbReference>
<dbReference type="FunFam" id="2.60.300.12:FF:000002">
    <property type="entry name" value="Iron-sulfur cluster insertion protein ErpA"/>
    <property type="match status" value="1"/>
</dbReference>
<dbReference type="Gene3D" id="2.60.300.12">
    <property type="entry name" value="HesB-like domain"/>
    <property type="match status" value="1"/>
</dbReference>
<dbReference type="HAMAP" id="MF_01380">
    <property type="entry name" value="Fe_S_insert_ErpA"/>
    <property type="match status" value="1"/>
</dbReference>
<dbReference type="InterPro" id="IPR000361">
    <property type="entry name" value="FeS_biogenesis"/>
</dbReference>
<dbReference type="InterPro" id="IPR016092">
    <property type="entry name" value="FeS_cluster_insertion"/>
</dbReference>
<dbReference type="InterPro" id="IPR017870">
    <property type="entry name" value="FeS_cluster_insertion_CS"/>
</dbReference>
<dbReference type="InterPro" id="IPR023063">
    <property type="entry name" value="FeS_cluster_insertion_RrpA"/>
</dbReference>
<dbReference type="InterPro" id="IPR035903">
    <property type="entry name" value="HesB-like_dom_sf"/>
</dbReference>
<dbReference type="NCBIfam" id="TIGR00049">
    <property type="entry name" value="iron-sulfur cluster assembly accessory protein"/>
    <property type="match status" value="1"/>
</dbReference>
<dbReference type="NCBIfam" id="NF010147">
    <property type="entry name" value="PRK13623.1"/>
    <property type="match status" value="1"/>
</dbReference>
<dbReference type="PANTHER" id="PTHR43011">
    <property type="entry name" value="IRON-SULFUR CLUSTER ASSEMBLY 2 HOMOLOG, MITOCHONDRIAL"/>
    <property type="match status" value="1"/>
</dbReference>
<dbReference type="PANTHER" id="PTHR43011:SF1">
    <property type="entry name" value="IRON-SULFUR CLUSTER ASSEMBLY 2 HOMOLOG, MITOCHONDRIAL"/>
    <property type="match status" value="1"/>
</dbReference>
<dbReference type="Pfam" id="PF01521">
    <property type="entry name" value="Fe-S_biosyn"/>
    <property type="match status" value="1"/>
</dbReference>
<dbReference type="SUPFAM" id="SSF89360">
    <property type="entry name" value="HesB-like domain"/>
    <property type="match status" value="1"/>
</dbReference>
<dbReference type="PROSITE" id="PS01152">
    <property type="entry name" value="HESB"/>
    <property type="match status" value="1"/>
</dbReference>
<sequence>MSNIQIPLIFTDAAAKKVKSLIEGEDNPNLRLRVYITGGGCSGFQYGFTFDDQINEGDLTIENQNVGLVVDPMSLQYLIGGTVDYTEGLDGSRFVVQNPNASSTCGCGSSFSI</sequence>
<comment type="function">
    <text evidence="1">Required for insertion of 4Fe-4S clusters for at least IspG.</text>
</comment>
<comment type="cofactor">
    <cofactor evidence="1">
        <name>iron-sulfur cluster</name>
        <dbReference type="ChEBI" id="CHEBI:30408"/>
    </cofactor>
    <text evidence="1">Binds 1 iron-sulfur cluster per subunit.</text>
</comment>
<comment type="subunit">
    <text evidence="1">Homodimer.</text>
</comment>
<comment type="similarity">
    <text evidence="1">Belongs to the HesB/IscA family.</text>
</comment>
<name>ERPA_ACTP2</name>
<accession>A3N2B0</accession>
<keyword id="KW-0408">Iron</keyword>
<keyword id="KW-0411">Iron-sulfur</keyword>
<keyword id="KW-0479">Metal-binding</keyword>
<keyword id="KW-1185">Reference proteome</keyword>
<proteinExistence type="inferred from homology"/>
<evidence type="ECO:0000255" key="1">
    <source>
        <dbReference type="HAMAP-Rule" id="MF_01380"/>
    </source>
</evidence>
<reference key="1">
    <citation type="journal article" date="2008" name="J. Bacteriol.">
        <title>The complete genome sequence of Actinobacillus pleuropneumoniae L20 (serotype 5b).</title>
        <authorList>
            <person name="Foote S.J."/>
            <person name="Bosse J.T."/>
            <person name="Bouevitch A.B."/>
            <person name="Langford P.R."/>
            <person name="Young N.M."/>
            <person name="Nash J.H.E."/>
        </authorList>
    </citation>
    <scope>NUCLEOTIDE SEQUENCE [LARGE SCALE GENOMIC DNA]</scope>
    <source>
        <strain>L20</strain>
    </source>
</reference>
<protein>
    <recommendedName>
        <fullName evidence="1">Iron-sulfur cluster insertion protein ErpA</fullName>
    </recommendedName>
</protein>